<keyword id="KW-0007">Acetylation</keyword>
<keyword id="KW-1003">Cell membrane</keyword>
<keyword id="KW-0449">Lipoprotein</keyword>
<keyword id="KW-0472">Membrane</keyword>
<keyword id="KW-0732">Signal</keyword>
<protein>
    <recommendedName>
        <fullName>Uncharacterized lipoprotein PYRAB04520</fullName>
    </recommendedName>
</protein>
<comment type="subcellular location">
    <subcellularLocation>
        <location evidence="2">Cell membrane</location>
        <topology evidence="2">Lipid-anchor</topology>
    </subcellularLocation>
</comment>
<comment type="similarity">
    <text evidence="3">Belongs to the BMP lipoprotein family.</text>
</comment>
<gene>
    <name type="ordered locus">PYRAB04520</name>
    <name type="ORF">PAB0302</name>
</gene>
<evidence type="ECO:0000255" key="1"/>
<evidence type="ECO:0000255" key="2">
    <source>
        <dbReference type="PROSITE-ProRule" id="PRU00303"/>
    </source>
</evidence>
<evidence type="ECO:0000305" key="3"/>
<accession>Q9V1H5</accession>
<accession>G8ZGF6</accession>
<proteinExistence type="inferred from homology"/>
<dbReference type="EMBL" id="AJ248284">
    <property type="protein sequence ID" value="CAB49374.1"/>
    <property type="molecule type" value="Genomic_DNA"/>
</dbReference>
<dbReference type="EMBL" id="HE613800">
    <property type="protein sequence ID" value="CCE69835.1"/>
    <property type="molecule type" value="Genomic_DNA"/>
</dbReference>
<dbReference type="PIR" id="G75161">
    <property type="entry name" value="G75161"/>
</dbReference>
<dbReference type="RefSeq" id="WP_010867576.1">
    <property type="nucleotide sequence ID" value="NC_000868.1"/>
</dbReference>
<dbReference type="SMR" id="Q9V1H5"/>
<dbReference type="STRING" id="272844.PAB0302"/>
<dbReference type="KEGG" id="pab:PAB0302"/>
<dbReference type="PATRIC" id="fig|272844.11.peg.479"/>
<dbReference type="eggNOG" id="arCOG00258">
    <property type="taxonomic scope" value="Archaea"/>
</dbReference>
<dbReference type="HOGENOM" id="CLU_038813_0_0_2"/>
<dbReference type="OrthoDB" id="26626at2157"/>
<dbReference type="PhylomeDB" id="Q9V1H5"/>
<dbReference type="Proteomes" id="UP000000810">
    <property type="component" value="Chromosome"/>
</dbReference>
<dbReference type="Proteomes" id="UP000009139">
    <property type="component" value="Chromosome"/>
</dbReference>
<dbReference type="GO" id="GO:0005886">
    <property type="term" value="C:plasma membrane"/>
    <property type="evidence" value="ECO:0007669"/>
    <property type="project" value="UniProtKB-SubCell"/>
</dbReference>
<dbReference type="CDD" id="cd06354">
    <property type="entry name" value="PBP1_PrnA-like"/>
    <property type="match status" value="1"/>
</dbReference>
<dbReference type="Gene3D" id="3.40.50.2300">
    <property type="match status" value="2"/>
</dbReference>
<dbReference type="InterPro" id="IPR050957">
    <property type="entry name" value="BMP_lipoprotein"/>
</dbReference>
<dbReference type="InterPro" id="IPR028082">
    <property type="entry name" value="Peripla_BP_I"/>
</dbReference>
<dbReference type="InterPro" id="IPR003760">
    <property type="entry name" value="PnrA-like"/>
</dbReference>
<dbReference type="PANTHER" id="PTHR34296:SF2">
    <property type="entry name" value="ABC TRANSPORTER GUANOSINE-BINDING PROTEIN NUPN"/>
    <property type="match status" value="1"/>
</dbReference>
<dbReference type="PANTHER" id="PTHR34296">
    <property type="entry name" value="TRANSCRIPTIONAL ACTIVATOR PROTEIN MED"/>
    <property type="match status" value="1"/>
</dbReference>
<dbReference type="Pfam" id="PF02608">
    <property type="entry name" value="Bmp"/>
    <property type="match status" value="1"/>
</dbReference>
<dbReference type="SUPFAM" id="SSF53822">
    <property type="entry name" value="Periplasmic binding protein-like I"/>
    <property type="match status" value="1"/>
</dbReference>
<dbReference type="PROSITE" id="PS51257">
    <property type="entry name" value="PROKAR_LIPOPROTEIN"/>
    <property type="match status" value="1"/>
</dbReference>
<sequence length="404" mass="44702">MRKLGLALSIMGLLLVSIVAGCIGGGTETKTEAKKVKVAILFDVGGRGDLSFNDMAYLGAERAKKELGVEIEYMTPKSKEDMKPLLEQLAQSKEYDLLVLVGFLWTSPLNEVADKYPDQKFALIDSTTGKVRENEVDILFREQEAAALMGVIASGMAYELGGDTIGAVAGMDIPPLWKFHIGYLFGAKYFEKKTGKPVKLLWQYTGTFGDTQVGYNTAMQLLQQGAKVLYGLAGLTHVGMFDAVKDWNEQGRGKALAMGQDASQEWYAPKYIPISGAKRVDVAVYDAIKMVVDGTWKGGIITLGLKENGVGYWDLDGVKQFAEFAKEAGKLKDMTPDEVVQIVKEQREKYIKPYVWDIVHELEEKIKSGEIVFKTPKTHEEYEQIIRELEKGNLNAALEKGSVE</sequence>
<reference key="1">
    <citation type="journal article" date="2003" name="Mol. Microbiol.">
        <title>An integrated analysis of the genome of the hyperthermophilic archaeon Pyrococcus abyssi.</title>
        <authorList>
            <person name="Cohen G.N."/>
            <person name="Barbe V."/>
            <person name="Flament D."/>
            <person name="Galperin M."/>
            <person name="Heilig R."/>
            <person name="Lecompte O."/>
            <person name="Poch O."/>
            <person name="Prieur D."/>
            <person name="Querellou J."/>
            <person name="Ripp R."/>
            <person name="Thierry J.-C."/>
            <person name="Van der Oost J."/>
            <person name="Weissenbach J."/>
            <person name="Zivanovic Y."/>
            <person name="Forterre P."/>
        </authorList>
    </citation>
    <scope>NUCLEOTIDE SEQUENCE [LARGE SCALE GENOMIC DNA]</scope>
    <source>
        <strain>GE5 / Orsay</strain>
    </source>
</reference>
<reference key="2">
    <citation type="journal article" date="2012" name="Curr. Microbiol.">
        <title>Re-annotation of two hyperthermophilic archaea Pyrococcus abyssi GE5 and Pyrococcus furiosus DSM 3638.</title>
        <authorList>
            <person name="Gao J."/>
            <person name="Wang J."/>
        </authorList>
    </citation>
    <scope>GENOME REANNOTATION</scope>
    <source>
        <strain>GE5 / Orsay</strain>
    </source>
</reference>
<organism>
    <name type="scientific">Pyrococcus abyssi (strain GE5 / Orsay)</name>
    <dbReference type="NCBI Taxonomy" id="272844"/>
    <lineage>
        <taxon>Archaea</taxon>
        <taxon>Methanobacteriati</taxon>
        <taxon>Methanobacteriota</taxon>
        <taxon>Thermococci</taxon>
        <taxon>Thermococcales</taxon>
        <taxon>Thermococcaceae</taxon>
        <taxon>Pyrococcus</taxon>
    </lineage>
</organism>
<feature type="signal peptide" evidence="3">
    <location>
        <begin position="1"/>
        <end position="21"/>
    </location>
</feature>
<feature type="chain" id="PRO_0000018011" description="Uncharacterized lipoprotein PYRAB04520">
    <location>
        <begin position="22"/>
        <end position="404"/>
    </location>
</feature>
<feature type="modified residue" description="N-acetylcysteine" evidence="1">
    <location>
        <position position="22"/>
    </location>
</feature>
<feature type="lipid moiety-binding region" description="S-archaeol cysteine" evidence="1">
    <location>
        <position position="22"/>
    </location>
</feature>
<name>Y452_PYRAB</name>